<dbReference type="EC" id="2.9.1.1" evidence="1"/>
<dbReference type="EMBL" id="AE014299">
    <property type="protein sequence ID" value="AAN53192.1"/>
    <property type="molecule type" value="Genomic_DNA"/>
</dbReference>
<dbReference type="RefSeq" id="NP_715747.1">
    <property type="nucleotide sequence ID" value="NC_004347.2"/>
</dbReference>
<dbReference type="RefSeq" id="WP_011070513.1">
    <property type="nucleotide sequence ID" value="NC_004347.2"/>
</dbReference>
<dbReference type="SMR" id="Q8EKI8"/>
<dbReference type="STRING" id="211586.SO_0105"/>
<dbReference type="PaxDb" id="211586-SO_0105"/>
<dbReference type="DNASU" id="1168002"/>
<dbReference type="KEGG" id="son:SO_0105"/>
<dbReference type="PATRIC" id="fig|211586.12.peg.104"/>
<dbReference type="eggNOG" id="COG1921">
    <property type="taxonomic scope" value="Bacteria"/>
</dbReference>
<dbReference type="HOGENOM" id="CLU_038142_1_0_6"/>
<dbReference type="OrthoDB" id="9787096at2"/>
<dbReference type="PhylomeDB" id="Q8EKI8"/>
<dbReference type="BioCyc" id="SONE211586:G1GMP-101-MONOMER"/>
<dbReference type="UniPathway" id="UPA00906">
    <property type="reaction ID" value="UER00896"/>
</dbReference>
<dbReference type="Proteomes" id="UP000008186">
    <property type="component" value="Chromosome"/>
</dbReference>
<dbReference type="GO" id="GO:0005737">
    <property type="term" value="C:cytoplasm"/>
    <property type="evidence" value="ECO:0007669"/>
    <property type="project" value="UniProtKB-SubCell"/>
</dbReference>
<dbReference type="GO" id="GO:0004125">
    <property type="term" value="F:L-seryl-tRNA(Sec) selenium transferase activity"/>
    <property type="evidence" value="ECO:0000318"/>
    <property type="project" value="GO_Central"/>
</dbReference>
<dbReference type="GO" id="GO:0001717">
    <property type="term" value="P:conversion of seryl-tRNAsec to selenocys-tRNAsec"/>
    <property type="evidence" value="ECO:0007669"/>
    <property type="project" value="UniProtKB-UniRule"/>
</dbReference>
<dbReference type="GO" id="GO:0001514">
    <property type="term" value="P:selenocysteine incorporation"/>
    <property type="evidence" value="ECO:0007669"/>
    <property type="project" value="UniProtKB-UniRule"/>
</dbReference>
<dbReference type="FunFam" id="3.40.640.10:FF:000028">
    <property type="entry name" value="L-seryl-tRNA(Sec) selenium transferase"/>
    <property type="match status" value="1"/>
</dbReference>
<dbReference type="Gene3D" id="3.90.1150.180">
    <property type="match status" value="1"/>
</dbReference>
<dbReference type="Gene3D" id="3.40.640.10">
    <property type="entry name" value="Type I PLP-dependent aspartate aminotransferase-like (Major domain)"/>
    <property type="match status" value="1"/>
</dbReference>
<dbReference type="HAMAP" id="MF_00423">
    <property type="entry name" value="SelA"/>
    <property type="match status" value="1"/>
</dbReference>
<dbReference type="InterPro" id="IPR015424">
    <property type="entry name" value="PyrdxlP-dep_Trfase"/>
</dbReference>
<dbReference type="InterPro" id="IPR015421">
    <property type="entry name" value="PyrdxlP-dep_Trfase_major"/>
</dbReference>
<dbReference type="InterPro" id="IPR018319">
    <property type="entry name" value="SelA-like"/>
</dbReference>
<dbReference type="InterPro" id="IPR004534">
    <property type="entry name" value="SelA_trans"/>
</dbReference>
<dbReference type="InterPro" id="IPR025862">
    <property type="entry name" value="SelA_trans_N_dom"/>
</dbReference>
<dbReference type="NCBIfam" id="TIGR00474">
    <property type="entry name" value="selA"/>
    <property type="match status" value="1"/>
</dbReference>
<dbReference type="PANTHER" id="PTHR32328">
    <property type="entry name" value="L-SERYL-TRNA(SEC) SELENIUM TRANSFERASE"/>
    <property type="match status" value="1"/>
</dbReference>
<dbReference type="PANTHER" id="PTHR32328:SF0">
    <property type="entry name" value="L-SERYL-TRNA(SEC) SELENIUM TRANSFERASE"/>
    <property type="match status" value="1"/>
</dbReference>
<dbReference type="Pfam" id="PF12390">
    <property type="entry name" value="Se-cys_synth_N"/>
    <property type="match status" value="1"/>
</dbReference>
<dbReference type="Pfam" id="PF03841">
    <property type="entry name" value="SelA"/>
    <property type="match status" value="1"/>
</dbReference>
<dbReference type="SUPFAM" id="SSF53383">
    <property type="entry name" value="PLP-dependent transferases"/>
    <property type="match status" value="1"/>
</dbReference>
<keyword id="KW-0963">Cytoplasm</keyword>
<keyword id="KW-0648">Protein biosynthesis</keyword>
<keyword id="KW-0663">Pyridoxal phosphate</keyword>
<keyword id="KW-1185">Reference proteome</keyword>
<keyword id="KW-0711">Selenium</keyword>
<keyword id="KW-0808">Transferase</keyword>
<protein>
    <recommendedName>
        <fullName evidence="1">L-seryl-tRNA(Sec) selenium transferase</fullName>
        <ecNumber evidence="1">2.9.1.1</ecNumber>
    </recommendedName>
    <alternativeName>
        <fullName evidence="1">Selenocysteine synthase</fullName>
        <shortName evidence="1">Sec synthase</shortName>
    </alternativeName>
    <alternativeName>
        <fullName evidence="1">Selenocysteinyl-tRNA(Sec) synthase</fullName>
    </alternativeName>
</protein>
<sequence>MMTQVPDTPQALYRALPSMDSLLADAVLAPLLQRYGKAAVKAALDSQLRTARELIAQERRLPAWCANPSLLNGYLVDQLSKDYSHSLKPVWNLTGTILHTNLGRAQQSEAAIRAVTSVMRYPTPLEFELAAGERGHRDNAISGLIQRLTGAEACCVVNNNAAAVLLMLSAVAAGKEVIVSRGELVEIGGAFRIPDIMRQAGCTLVEVGSTNRTHLKDYEQAITENTAAIMKVHTSNYHISGFTAAVEEARLGQLCRERGILLISDLGSGSLTDLRRFGLKQEPTPQAMLADGVDLVSFSGDKLLGGPQSGLIVGKQALINKLQSHPLKRALRCDKLILAALEATLIHYLNPETLDKELPIMAKFARSQAELRQIGERLQQALAPLFTPSYGLELVECQTQVGSGSQPDTFLPSIGLCFNAQEGGSLTLLEQHFKQAQRPVIGRMTQDQLRLDLRGIDDEAELLAELSTLGVQL</sequence>
<proteinExistence type="inferred from homology"/>
<reference key="1">
    <citation type="journal article" date="2002" name="Nat. Biotechnol.">
        <title>Genome sequence of the dissimilatory metal ion-reducing bacterium Shewanella oneidensis.</title>
        <authorList>
            <person name="Heidelberg J.F."/>
            <person name="Paulsen I.T."/>
            <person name="Nelson K.E."/>
            <person name="Gaidos E.J."/>
            <person name="Nelson W.C."/>
            <person name="Read T.D."/>
            <person name="Eisen J.A."/>
            <person name="Seshadri R."/>
            <person name="Ward N.L."/>
            <person name="Methe B.A."/>
            <person name="Clayton R.A."/>
            <person name="Meyer T."/>
            <person name="Tsapin A."/>
            <person name="Scott J."/>
            <person name="Beanan M.J."/>
            <person name="Brinkac L.M."/>
            <person name="Daugherty S.C."/>
            <person name="DeBoy R.T."/>
            <person name="Dodson R.J."/>
            <person name="Durkin A.S."/>
            <person name="Haft D.H."/>
            <person name="Kolonay J.F."/>
            <person name="Madupu R."/>
            <person name="Peterson J.D."/>
            <person name="Umayam L.A."/>
            <person name="White O."/>
            <person name="Wolf A.M."/>
            <person name="Vamathevan J.J."/>
            <person name="Weidman J.F."/>
            <person name="Impraim M."/>
            <person name="Lee K."/>
            <person name="Berry K.J."/>
            <person name="Lee C."/>
            <person name="Mueller J."/>
            <person name="Khouri H.M."/>
            <person name="Gill J."/>
            <person name="Utterback T.R."/>
            <person name="McDonald L.A."/>
            <person name="Feldblyum T.V."/>
            <person name="Smith H.O."/>
            <person name="Venter J.C."/>
            <person name="Nealson K.H."/>
            <person name="Fraser C.M."/>
        </authorList>
    </citation>
    <scope>NUCLEOTIDE SEQUENCE [LARGE SCALE GENOMIC DNA]</scope>
    <source>
        <strain>ATCC 700550 / JCM 31522 / CIP 106686 / LMG 19005 / NCIMB 14063 / MR-1</strain>
    </source>
</reference>
<evidence type="ECO:0000255" key="1">
    <source>
        <dbReference type="HAMAP-Rule" id="MF_00423"/>
    </source>
</evidence>
<accession>Q8EKI8</accession>
<name>SELA_SHEON</name>
<organism>
    <name type="scientific">Shewanella oneidensis (strain ATCC 700550 / JCM 31522 / CIP 106686 / LMG 19005 / NCIMB 14063 / MR-1)</name>
    <dbReference type="NCBI Taxonomy" id="211586"/>
    <lineage>
        <taxon>Bacteria</taxon>
        <taxon>Pseudomonadati</taxon>
        <taxon>Pseudomonadota</taxon>
        <taxon>Gammaproteobacteria</taxon>
        <taxon>Alteromonadales</taxon>
        <taxon>Shewanellaceae</taxon>
        <taxon>Shewanella</taxon>
    </lineage>
</organism>
<gene>
    <name evidence="1" type="primary">selA</name>
    <name type="ordered locus">SO_0105</name>
</gene>
<feature type="chain" id="PRO_0000189617" description="L-seryl-tRNA(Sec) selenium transferase">
    <location>
        <begin position="1"/>
        <end position="473"/>
    </location>
</feature>
<feature type="modified residue" description="N6-(pyridoxal phosphate)lysine" evidence="1">
    <location>
        <position position="302"/>
    </location>
</feature>
<comment type="function">
    <text evidence="1">Converts seryl-tRNA(Sec) to selenocysteinyl-tRNA(Sec) required for selenoprotein biosynthesis.</text>
</comment>
<comment type="catalytic activity">
    <reaction evidence="1">
        <text>L-seryl-tRNA(Sec) + selenophosphate + H(+) = L-selenocysteinyl-tRNA(Sec) + phosphate</text>
        <dbReference type="Rhea" id="RHEA:22728"/>
        <dbReference type="Rhea" id="RHEA-COMP:9742"/>
        <dbReference type="Rhea" id="RHEA-COMP:9743"/>
        <dbReference type="ChEBI" id="CHEBI:15378"/>
        <dbReference type="ChEBI" id="CHEBI:16144"/>
        <dbReference type="ChEBI" id="CHEBI:43474"/>
        <dbReference type="ChEBI" id="CHEBI:78533"/>
        <dbReference type="ChEBI" id="CHEBI:78573"/>
        <dbReference type="EC" id="2.9.1.1"/>
    </reaction>
</comment>
<comment type="cofactor">
    <cofactor evidence="1">
        <name>pyridoxal 5'-phosphate</name>
        <dbReference type="ChEBI" id="CHEBI:597326"/>
    </cofactor>
</comment>
<comment type="pathway">
    <text evidence="1">Aminoacyl-tRNA biosynthesis; selenocysteinyl-tRNA(Sec) biosynthesis; selenocysteinyl-tRNA(Sec) from L-seryl-tRNA(Sec) (bacterial route): step 1/1.</text>
</comment>
<comment type="subcellular location">
    <subcellularLocation>
        <location evidence="1">Cytoplasm</location>
    </subcellularLocation>
</comment>
<comment type="similarity">
    <text evidence="1">Belongs to the SelA family.</text>
</comment>